<organism>
    <name type="scientific">Methanococcoides burtonii (strain DSM 6242 / NBRC 107633 / OCM 468 / ACE-M)</name>
    <dbReference type="NCBI Taxonomy" id="259564"/>
    <lineage>
        <taxon>Archaea</taxon>
        <taxon>Methanobacteriati</taxon>
        <taxon>Methanobacteriota</taxon>
        <taxon>Stenosarchaea group</taxon>
        <taxon>Methanomicrobia</taxon>
        <taxon>Methanosarcinales</taxon>
        <taxon>Methanosarcinaceae</taxon>
        <taxon>Methanococcoides</taxon>
    </lineage>
</organism>
<evidence type="ECO:0000255" key="1">
    <source>
        <dbReference type="HAMAP-Rule" id="MF_00306"/>
    </source>
</evidence>
<sequence length="439" mass="48261">MVMDKLGSSLQDALKKLVGAGRIDEKTVTEVVKDIQRALLQADVNVKLVMQMSSHIKERALKEEVPPGMNPREHVIKIVYQELISIVGRSADIPLKPQTIMMIGLQGSGKTTTTSKLSRYFQRKGLKPAVICADTFRPGAYQQLKTLCDKLNVPFYGEVGNPDAVGIVERGLAELGKNDVLIVDTAGRHSLEADLIDEMEQIHEIAQPDYKLLVLDGAIGQQASEQARAFNDSVGISGVVISKLDGTAKGGGALSAVSETNSAIAFIGVGETPDDLEKFEPDRFISRLLGMGDIKSLIEKAEETLSEEDIDMEAMMRGRFTLKDMYSQLEAMNKMGPMKQIMQMLPLGGMGAKLSDDAYKVTEDKMKGYRVLMDSMTEEELLNPRLLGSSRIKRISLGSGSSPDAVRELLKYYKMMQNAMKGLRGGKFNIQKMMKKMGM</sequence>
<proteinExistence type="inferred from homology"/>
<comment type="function">
    <text evidence="1">Involved in targeting and insertion of nascent membrane proteins into the cytoplasmic membrane. Binds to the hydrophobic signal sequence of the ribosome-nascent chain (RNC) as it emerges from the ribosomes. The SRP-RNC complex is then targeted to the cytoplasmic membrane where it interacts with the SRP receptor FtsY.</text>
</comment>
<comment type="catalytic activity">
    <reaction evidence="1">
        <text>GTP + H2O = GDP + phosphate + H(+)</text>
        <dbReference type="Rhea" id="RHEA:19669"/>
        <dbReference type="ChEBI" id="CHEBI:15377"/>
        <dbReference type="ChEBI" id="CHEBI:15378"/>
        <dbReference type="ChEBI" id="CHEBI:37565"/>
        <dbReference type="ChEBI" id="CHEBI:43474"/>
        <dbReference type="ChEBI" id="CHEBI:58189"/>
        <dbReference type="EC" id="3.6.5.4"/>
    </reaction>
</comment>
<comment type="subunit">
    <text evidence="1">Part of the signal recognition particle protein translocation system, which is composed of SRP and FtsY. Archaeal SRP consists of a 7S RNA molecule of 300 nucleotides and two protein subunits: SRP54 and SRP19.</text>
</comment>
<comment type="subcellular location">
    <subcellularLocation>
        <location evidence="1">Cytoplasm</location>
    </subcellularLocation>
    <text evidence="1">The SRP-RNC complex is targeted to the cytoplasmic membrane.</text>
</comment>
<comment type="domain">
    <text evidence="1">Composed of three domains: the N-terminal N domain, which is responsible for interactions with the ribosome, the central G domain, which binds GTP, and the C-terminal M domain, which binds the RNA and the signal sequence of the RNC.</text>
</comment>
<comment type="similarity">
    <text evidence="1">Belongs to the GTP-binding SRP family. SRP54 subfamily.</text>
</comment>
<accession>Q12ZG8</accession>
<reference key="1">
    <citation type="journal article" date="2009" name="ISME J.">
        <title>The genome sequence of the psychrophilic archaeon, Methanococcoides burtonii: the role of genome evolution in cold adaptation.</title>
        <authorList>
            <person name="Allen M.A."/>
            <person name="Lauro F.M."/>
            <person name="Williams T.J."/>
            <person name="Burg D."/>
            <person name="Siddiqui K.S."/>
            <person name="De Francisci D."/>
            <person name="Chong K.W."/>
            <person name="Pilak O."/>
            <person name="Chew H.H."/>
            <person name="De Maere M.Z."/>
            <person name="Ting L."/>
            <person name="Katrib M."/>
            <person name="Ng C."/>
            <person name="Sowers K.R."/>
            <person name="Galperin M.Y."/>
            <person name="Anderson I.J."/>
            <person name="Ivanova N."/>
            <person name="Dalin E."/>
            <person name="Martinez M."/>
            <person name="Lapidus A."/>
            <person name="Hauser L."/>
            <person name="Land M."/>
            <person name="Thomas T."/>
            <person name="Cavicchioli R."/>
        </authorList>
    </citation>
    <scope>NUCLEOTIDE SEQUENCE [LARGE SCALE GENOMIC DNA]</scope>
    <source>
        <strain>DSM 6242 / NBRC 107633 / OCM 468 / ACE-M</strain>
    </source>
</reference>
<protein>
    <recommendedName>
        <fullName evidence="1">Signal recognition particle 54 kDa protein</fullName>
        <shortName evidence="1">SRP54</shortName>
        <ecNumber evidence="1">3.6.5.4</ecNumber>
    </recommendedName>
</protein>
<keyword id="KW-0963">Cytoplasm</keyword>
<keyword id="KW-0342">GTP-binding</keyword>
<keyword id="KW-0378">Hydrolase</keyword>
<keyword id="KW-0547">Nucleotide-binding</keyword>
<keyword id="KW-0687">Ribonucleoprotein</keyword>
<keyword id="KW-0694">RNA-binding</keyword>
<keyword id="KW-0733">Signal recognition particle</keyword>
<gene>
    <name evidence="1" type="primary">srp54</name>
    <name type="ordered locus">Mbur_0141</name>
</gene>
<dbReference type="EC" id="3.6.5.4" evidence="1"/>
<dbReference type="EMBL" id="CP000300">
    <property type="protein sequence ID" value="ABE51158.1"/>
    <property type="molecule type" value="Genomic_DNA"/>
</dbReference>
<dbReference type="RefSeq" id="WP_011498322.1">
    <property type="nucleotide sequence ID" value="NC_007955.1"/>
</dbReference>
<dbReference type="SMR" id="Q12ZG8"/>
<dbReference type="STRING" id="259564.Mbur_0141"/>
<dbReference type="GeneID" id="3996791"/>
<dbReference type="KEGG" id="mbu:Mbur_0141"/>
<dbReference type="HOGENOM" id="CLU_009301_6_0_2"/>
<dbReference type="OrthoDB" id="52849at2157"/>
<dbReference type="Proteomes" id="UP000001979">
    <property type="component" value="Chromosome"/>
</dbReference>
<dbReference type="GO" id="GO:0048500">
    <property type="term" value="C:signal recognition particle"/>
    <property type="evidence" value="ECO:0007669"/>
    <property type="project" value="UniProtKB-UniRule"/>
</dbReference>
<dbReference type="GO" id="GO:0008312">
    <property type="term" value="F:7S RNA binding"/>
    <property type="evidence" value="ECO:0007669"/>
    <property type="project" value="UniProtKB-UniRule"/>
</dbReference>
<dbReference type="GO" id="GO:0016887">
    <property type="term" value="F:ATP hydrolysis activity"/>
    <property type="evidence" value="ECO:0007669"/>
    <property type="project" value="InterPro"/>
</dbReference>
<dbReference type="GO" id="GO:0005525">
    <property type="term" value="F:GTP binding"/>
    <property type="evidence" value="ECO:0007669"/>
    <property type="project" value="UniProtKB-UniRule"/>
</dbReference>
<dbReference type="GO" id="GO:0003924">
    <property type="term" value="F:GTPase activity"/>
    <property type="evidence" value="ECO:0007669"/>
    <property type="project" value="UniProtKB-UniRule"/>
</dbReference>
<dbReference type="GO" id="GO:0006614">
    <property type="term" value="P:SRP-dependent cotranslational protein targeting to membrane"/>
    <property type="evidence" value="ECO:0007669"/>
    <property type="project" value="InterPro"/>
</dbReference>
<dbReference type="CDD" id="cd17875">
    <property type="entry name" value="SRP54_G"/>
    <property type="match status" value="1"/>
</dbReference>
<dbReference type="FunFam" id="3.40.50.300:FF:000022">
    <property type="entry name" value="Signal recognition particle 54 kDa subunit"/>
    <property type="match status" value="1"/>
</dbReference>
<dbReference type="Gene3D" id="3.40.50.300">
    <property type="entry name" value="P-loop containing nucleotide triphosphate hydrolases"/>
    <property type="match status" value="1"/>
</dbReference>
<dbReference type="Gene3D" id="1.20.120.140">
    <property type="entry name" value="Signal recognition particle SRP54, nucleotide-binding domain"/>
    <property type="match status" value="1"/>
</dbReference>
<dbReference type="Gene3D" id="1.10.260.30">
    <property type="entry name" value="Signal recognition particle, SRP54 subunit, M-domain"/>
    <property type="match status" value="1"/>
</dbReference>
<dbReference type="HAMAP" id="MF_00306">
    <property type="entry name" value="SRP54"/>
    <property type="match status" value="1"/>
</dbReference>
<dbReference type="InterPro" id="IPR003593">
    <property type="entry name" value="AAA+_ATPase"/>
</dbReference>
<dbReference type="InterPro" id="IPR027417">
    <property type="entry name" value="P-loop_NTPase"/>
</dbReference>
<dbReference type="InterPro" id="IPR036891">
    <property type="entry name" value="Signal_recog_part_SRP54_M_sf"/>
</dbReference>
<dbReference type="InterPro" id="IPR013822">
    <property type="entry name" value="Signal_recog_particl_SRP54_hlx"/>
</dbReference>
<dbReference type="InterPro" id="IPR004125">
    <property type="entry name" value="Signal_recog_particle_SRP54_M"/>
</dbReference>
<dbReference type="InterPro" id="IPR036225">
    <property type="entry name" value="SRP/SRP_N"/>
</dbReference>
<dbReference type="InterPro" id="IPR022941">
    <property type="entry name" value="SRP54"/>
</dbReference>
<dbReference type="InterPro" id="IPR000897">
    <property type="entry name" value="SRP54_GTPase_dom"/>
</dbReference>
<dbReference type="InterPro" id="IPR042101">
    <property type="entry name" value="SRP54_N_sf"/>
</dbReference>
<dbReference type="PANTHER" id="PTHR11564">
    <property type="entry name" value="SIGNAL RECOGNITION PARTICLE 54K PROTEIN SRP54"/>
    <property type="match status" value="1"/>
</dbReference>
<dbReference type="PANTHER" id="PTHR11564:SF5">
    <property type="entry name" value="SIGNAL RECOGNITION PARTICLE SUBUNIT SRP54"/>
    <property type="match status" value="1"/>
</dbReference>
<dbReference type="Pfam" id="PF00448">
    <property type="entry name" value="SRP54"/>
    <property type="match status" value="1"/>
</dbReference>
<dbReference type="Pfam" id="PF02881">
    <property type="entry name" value="SRP54_N"/>
    <property type="match status" value="1"/>
</dbReference>
<dbReference type="Pfam" id="PF02978">
    <property type="entry name" value="SRP_SPB"/>
    <property type="match status" value="1"/>
</dbReference>
<dbReference type="SMART" id="SM00382">
    <property type="entry name" value="AAA"/>
    <property type="match status" value="1"/>
</dbReference>
<dbReference type="SMART" id="SM00962">
    <property type="entry name" value="SRP54"/>
    <property type="match status" value="1"/>
</dbReference>
<dbReference type="SMART" id="SM00963">
    <property type="entry name" value="SRP54_N"/>
    <property type="match status" value="1"/>
</dbReference>
<dbReference type="SUPFAM" id="SSF47364">
    <property type="entry name" value="Domain of the SRP/SRP receptor G-proteins"/>
    <property type="match status" value="1"/>
</dbReference>
<dbReference type="SUPFAM" id="SSF52540">
    <property type="entry name" value="P-loop containing nucleoside triphosphate hydrolases"/>
    <property type="match status" value="1"/>
</dbReference>
<dbReference type="SUPFAM" id="SSF47446">
    <property type="entry name" value="Signal peptide-binding domain"/>
    <property type="match status" value="1"/>
</dbReference>
<feature type="chain" id="PRO_0000300755" description="Signal recognition particle 54 kDa protein">
    <location>
        <begin position="1"/>
        <end position="439"/>
    </location>
</feature>
<feature type="binding site" evidence="1">
    <location>
        <begin position="104"/>
        <end position="111"/>
    </location>
    <ligand>
        <name>GTP</name>
        <dbReference type="ChEBI" id="CHEBI:37565"/>
    </ligand>
</feature>
<feature type="binding site" evidence="1">
    <location>
        <begin position="184"/>
        <end position="188"/>
    </location>
    <ligand>
        <name>GTP</name>
        <dbReference type="ChEBI" id="CHEBI:37565"/>
    </ligand>
</feature>
<feature type="binding site" evidence="1">
    <location>
        <begin position="242"/>
        <end position="245"/>
    </location>
    <ligand>
        <name>GTP</name>
        <dbReference type="ChEBI" id="CHEBI:37565"/>
    </ligand>
</feature>
<name>SRP54_METBU</name>